<organism>
    <name type="scientific">Acaryochloris marina (strain MBIC 11017)</name>
    <dbReference type="NCBI Taxonomy" id="329726"/>
    <lineage>
        <taxon>Bacteria</taxon>
        <taxon>Bacillati</taxon>
        <taxon>Cyanobacteriota</taxon>
        <taxon>Cyanophyceae</taxon>
        <taxon>Acaryochloridales</taxon>
        <taxon>Acaryochloridaceae</taxon>
        <taxon>Acaryochloris</taxon>
    </lineage>
</organism>
<proteinExistence type="inferred from homology"/>
<gene>
    <name evidence="1" type="primary">ureD</name>
    <name type="ordered locus">AM1_5103</name>
</gene>
<name>URED_ACAM1</name>
<keyword id="KW-0143">Chaperone</keyword>
<keyword id="KW-0963">Cytoplasm</keyword>
<keyword id="KW-0996">Nickel insertion</keyword>
<keyword id="KW-1185">Reference proteome</keyword>
<reference key="1">
    <citation type="journal article" date="2008" name="Proc. Natl. Acad. Sci. U.S.A.">
        <title>Niche adaptation and genome expansion in the chlorophyll d-producing cyanobacterium Acaryochloris marina.</title>
        <authorList>
            <person name="Swingley W.D."/>
            <person name="Chen M."/>
            <person name="Cheung P.C."/>
            <person name="Conrad A.L."/>
            <person name="Dejesa L.C."/>
            <person name="Hao J."/>
            <person name="Honchak B.M."/>
            <person name="Karbach L.E."/>
            <person name="Kurdoglu A."/>
            <person name="Lahiri S."/>
            <person name="Mastrian S.D."/>
            <person name="Miyashita H."/>
            <person name="Page L."/>
            <person name="Ramakrishna P."/>
            <person name="Satoh S."/>
            <person name="Sattley W.M."/>
            <person name="Shimada Y."/>
            <person name="Taylor H.L."/>
            <person name="Tomo T."/>
            <person name="Tsuchiya T."/>
            <person name="Wang Z.T."/>
            <person name="Raymond J."/>
            <person name="Mimuro M."/>
            <person name="Blankenship R.E."/>
            <person name="Touchman J.W."/>
        </authorList>
    </citation>
    <scope>NUCLEOTIDE SEQUENCE [LARGE SCALE GENOMIC DNA]</scope>
    <source>
        <strain>MBIC 11017</strain>
    </source>
</reference>
<protein>
    <recommendedName>
        <fullName evidence="1">Urease accessory protein UreD</fullName>
    </recommendedName>
</protein>
<accession>B0C790</accession>
<dbReference type="EMBL" id="CP000828">
    <property type="protein sequence ID" value="ABW30067.1"/>
    <property type="molecule type" value="Genomic_DNA"/>
</dbReference>
<dbReference type="RefSeq" id="WP_012165334.1">
    <property type="nucleotide sequence ID" value="NC_009925.1"/>
</dbReference>
<dbReference type="SMR" id="B0C790"/>
<dbReference type="STRING" id="329726.AM1_5103"/>
<dbReference type="KEGG" id="amr:AM1_5103"/>
<dbReference type="eggNOG" id="COG0829">
    <property type="taxonomic scope" value="Bacteria"/>
</dbReference>
<dbReference type="HOGENOM" id="CLU_056339_0_0_3"/>
<dbReference type="OrthoDB" id="9798842at2"/>
<dbReference type="Proteomes" id="UP000000268">
    <property type="component" value="Chromosome"/>
</dbReference>
<dbReference type="GO" id="GO:0005737">
    <property type="term" value="C:cytoplasm"/>
    <property type="evidence" value="ECO:0007669"/>
    <property type="project" value="UniProtKB-SubCell"/>
</dbReference>
<dbReference type="GO" id="GO:0016151">
    <property type="term" value="F:nickel cation binding"/>
    <property type="evidence" value="ECO:0007669"/>
    <property type="project" value="UniProtKB-UniRule"/>
</dbReference>
<dbReference type="HAMAP" id="MF_01384">
    <property type="entry name" value="UreD"/>
    <property type="match status" value="1"/>
</dbReference>
<dbReference type="InterPro" id="IPR002669">
    <property type="entry name" value="UreD"/>
</dbReference>
<dbReference type="PANTHER" id="PTHR33643">
    <property type="entry name" value="UREASE ACCESSORY PROTEIN D"/>
    <property type="match status" value="1"/>
</dbReference>
<dbReference type="PANTHER" id="PTHR33643:SF1">
    <property type="entry name" value="UREASE ACCESSORY PROTEIN D"/>
    <property type="match status" value="1"/>
</dbReference>
<dbReference type="Pfam" id="PF01774">
    <property type="entry name" value="UreD"/>
    <property type="match status" value="1"/>
</dbReference>
<sequence>MQQLEKQSDLASWHGRLSLTYEKKAHQTQVQQSYHQAPLNLQRPFYPEGPVCHSVMMHTAGGMVGGDRLSINVTLQPQTHALLTTTSAGKVYRSNGHGAQQTVQCQLDTNAILEWLPLGTIVFDQAQFRQTLQVELGPGAIFCGWDLTRFGRSARGERFMQGDWRSHTEIWQQGAPLWIDRQWLPGQPDIWESPHGLAGQPVVGSFLWVGQGVEPNLVQTARDLWQPTTDGAEMGVTRLPLGLVCRYRGPSSQAARQWFIQVWNLLRSTHLGRPACPPRVWPL</sequence>
<comment type="function">
    <text evidence="1">Required for maturation of urease via the functional incorporation of the urease nickel metallocenter.</text>
</comment>
<comment type="subunit">
    <text evidence="1">UreD, UreF and UreG form a complex that acts as a GTP-hydrolysis-dependent molecular chaperone, activating the urease apoprotein by helping to assemble the nickel containing metallocenter of UreC. The UreE protein probably delivers the nickel.</text>
</comment>
<comment type="subcellular location">
    <subcellularLocation>
        <location evidence="1">Cytoplasm</location>
    </subcellularLocation>
</comment>
<comment type="similarity">
    <text evidence="1">Belongs to the UreD family.</text>
</comment>
<evidence type="ECO:0000255" key="1">
    <source>
        <dbReference type="HAMAP-Rule" id="MF_01384"/>
    </source>
</evidence>
<feature type="chain" id="PRO_0000340397" description="Urease accessory protein UreD">
    <location>
        <begin position="1"/>
        <end position="283"/>
    </location>
</feature>